<proteinExistence type="inferred from homology"/>
<feature type="chain" id="PRO_0000352945" description="Threonylcarbamoyl-AMP synthase">
    <location>
        <begin position="1"/>
        <end position="189"/>
    </location>
</feature>
<feature type="domain" description="YrdC-like" evidence="1">
    <location>
        <begin position="6"/>
        <end position="189"/>
    </location>
</feature>
<organism>
    <name type="scientific">Photorhabdus laumondii subsp. laumondii (strain DSM 15139 / CIP 105565 / TT01)</name>
    <name type="common">Photorhabdus luminescens subsp. laumondii</name>
    <dbReference type="NCBI Taxonomy" id="243265"/>
    <lineage>
        <taxon>Bacteria</taxon>
        <taxon>Pseudomonadati</taxon>
        <taxon>Pseudomonadota</taxon>
        <taxon>Gammaproteobacteria</taxon>
        <taxon>Enterobacterales</taxon>
        <taxon>Morganellaceae</taxon>
        <taxon>Photorhabdus</taxon>
    </lineage>
</organism>
<name>TSAC_PHOLL</name>
<gene>
    <name evidence="1" type="primary">tsaC</name>
    <name type="synonym">rimN</name>
    <name type="ordered locus">plu4692</name>
</gene>
<evidence type="ECO:0000255" key="1">
    <source>
        <dbReference type="HAMAP-Rule" id="MF_01852"/>
    </source>
</evidence>
<dbReference type="EC" id="2.7.7.87" evidence="1"/>
<dbReference type="EMBL" id="BX571874">
    <property type="protein sequence ID" value="CAE17064.1"/>
    <property type="molecule type" value="Genomic_DNA"/>
</dbReference>
<dbReference type="RefSeq" id="WP_011148762.1">
    <property type="nucleotide sequence ID" value="NC_005126.1"/>
</dbReference>
<dbReference type="SMR" id="Q7MYI5"/>
<dbReference type="STRING" id="243265.plu4692"/>
<dbReference type="GeneID" id="48850916"/>
<dbReference type="KEGG" id="plu:plu4692"/>
<dbReference type="eggNOG" id="COG0009">
    <property type="taxonomic scope" value="Bacteria"/>
</dbReference>
<dbReference type="HOGENOM" id="CLU_031397_6_0_6"/>
<dbReference type="OrthoDB" id="9814580at2"/>
<dbReference type="Proteomes" id="UP000002514">
    <property type="component" value="Chromosome"/>
</dbReference>
<dbReference type="GO" id="GO:0005737">
    <property type="term" value="C:cytoplasm"/>
    <property type="evidence" value="ECO:0007669"/>
    <property type="project" value="UniProtKB-SubCell"/>
</dbReference>
<dbReference type="GO" id="GO:0005524">
    <property type="term" value="F:ATP binding"/>
    <property type="evidence" value="ECO:0007669"/>
    <property type="project" value="UniProtKB-UniRule"/>
</dbReference>
<dbReference type="GO" id="GO:0003725">
    <property type="term" value="F:double-stranded RNA binding"/>
    <property type="evidence" value="ECO:0007669"/>
    <property type="project" value="InterPro"/>
</dbReference>
<dbReference type="GO" id="GO:0061710">
    <property type="term" value="F:L-threonylcarbamoyladenylate synthase"/>
    <property type="evidence" value="ECO:0007669"/>
    <property type="project" value="UniProtKB-EC"/>
</dbReference>
<dbReference type="GO" id="GO:0000049">
    <property type="term" value="F:tRNA binding"/>
    <property type="evidence" value="ECO:0007669"/>
    <property type="project" value="TreeGrafter"/>
</dbReference>
<dbReference type="GO" id="GO:0006450">
    <property type="term" value="P:regulation of translational fidelity"/>
    <property type="evidence" value="ECO:0007669"/>
    <property type="project" value="TreeGrafter"/>
</dbReference>
<dbReference type="GO" id="GO:0002949">
    <property type="term" value="P:tRNA threonylcarbamoyladenosine modification"/>
    <property type="evidence" value="ECO:0007669"/>
    <property type="project" value="UniProtKB-UniRule"/>
</dbReference>
<dbReference type="FunFam" id="3.90.870.10:FF:000004">
    <property type="entry name" value="Threonylcarbamoyl-AMP synthase"/>
    <property type="match status" value="1"/>
</dbReference>
<dbReference type="Gene3D" id="3.90.870.10">
    <property type="entry name" value="DHBP synthase"/>
    <property type="match status" value="1"/>
</dbReference>
<dbReference type="HAMAP" id="MF_01852">
    <property type="entry name" value="TsaC"/>
    <property type="match status" value="1"/>
</dbReference>
<dbReference type="InterPro" id="IPR017945">
    <property type="entry name" value="DHBP_synth_RibB-like_a/b_dom"/>
</dbReference>
<dbReference type="InterPro" id="IPR006070">
    <property type="entry name" value="Sua5-like_dom"/>
</dbReference>
<dbReference type="InterPro" id="IPR023535">
    <property type="entry name" value="TC-AMP_synthase"/>
</dbReference>
<dbReference type="InterPro" id="IPR050156">
    <property type="entry name" value="TC-AMP_synthase_SUA5"/>
</dbReference>
<dbReference type="NCBIfam" id="NF007919">
    <property type="entry name" value="PRK10634.1"/>
    <property type="match status" value="1"/>
</dbReference>
<dbReference type="PANTHER" id="PTHR17490">
    <property type="entry name" value="SUA5"/>
    <property type="match status" value="1"/>
</dbReference>
<dbReference type="PANTHER" id="PTHR17490:SF18">
    <property type="entry name" value="THREONYLCARBAMOYL-AMP SYNTHASE"/>
    <property type="match status" value="1"/>
</dbReference>
<dbReference type="Pfam" id="PF01300">
    <property type="entry name" value="Sua5_yciO_yrdC"/>
    <property type="match status" value="1"/>
</dbReference>
<dbReference type="SUPFAM" id="SSF55821">
    <property type="entry name" value="YrdC/RibB"/>
    <property type="match status" value="1"/>
</dbReference>
<dbReference type="PROSITE" id="PS51163">
    <property type="entry name" value="YRDC"/>
    <property type="match status" value="1"/>
</dbReference>
<comment type="function">
    <text evidence="1">Required for the formation of a threonylcarbamoyl group on adenosine at position 37 (t(6)A37) in tRNAs that read codons beginning with adenine. Catalyzes the conversion of L-threonine, HCO(3)(-)/CO(2) and ATP to give threonylcarbamoyl-AMP (TC-AMP) as the acyladenylate intermediate, with the release of diphosphate.</text>
</comment>
<comment type="catalytic activity">
    <reaction evidence="1">
        <text>L-threonine + hydrogencarbonate + ATP = L-threonylcarbamoyladenylate + diphosphate + H2O</text>
        <dbReference type="Rhea" id="RHEA:36407"/>
        <dbReference type="ChEBI" id="CHEBI:15377"/>
        <dbReference type="ChEBI" id="CHEBI:17544"/>
        <dbReference type="ChEBI" id="CHEBI:30616"/>
        <dbReference type="ChEBI" id="CHEBI:33019"/>
        <dbReference type="ChEBI" id="CHEBI:57926"/>
        <dbReference type="ChEBI" id="CHEBI:73682"/>
        <dbReference type="EC" id="2.7.7.87"/>
    </reaction>
</comment>
<comment type="subcellular location">
    <subcellularLocation>
        <location evidence="1">Cytoplasm</location>
    </subcellularLocation>
</comment>
<comment type="similarity">
    <text evidence="1">Belongs to the SUA5 family. TsaC subfamily.</text>
</comment>
<protein>
    <recommendedName>
        <fullName evidence="1">Threonylcarbamoyl-AMP synthase</fullName>
        <shortName evidence="1">TC-AMP synthase</shortName>
        <ecNumber evidence="1">2.7.7.87</ecNumber>
    </recommendedName>
    <alternativeName>
        <fullName evidence="1">L-threonylcarbamoyladenylate synthase</fullName>
    </alternativeName>
    <alternativeName>
        <fullName evidence="1">t(6)A37 threonylcarbamoyladenosine biosynthesis protein TsaC</fullName>
    </alternativeName>
    <alternativeName>
        <fullName evidence="1">tRNA threonylcarbamoyladenosine biosynthesis protein TsaC</fullName>
    </alternativeName>
</protein>
<reference key="1">
    <citation type="journal article" date="2003" name="Nat. Biotechnol.">
        <title>The genome sequence of the entomopathogenic bacterium Photorhabdus luminescens.</title>
        <authorList>
            <person name="Duchaud E."/>
            <person name="Rusniok C."/>
            <person name="Frangeul L."/>
            <person name="Buchrieser C."/>
            <person name="Givaudan A."/>
            <person name="Taourit S."/>
            <person name="Bocs S."/>
            <person name="Boursaux-Eude C."/>
            <person name="Chandler M."/>
            <person name="Charles J.-F."/>
            <person name="Dassa E."/>
            <person name="Derose R."/>
            <person name="Derzelle S."/>
            <person name="Freyssinet G."/>
            <person name="Gaudriault S."/>
            <person name="Medigue C."/>
            <person name="Lanois A."/>
            <person name="Powell K."/>
            <person name="Siguier P."/>
            <person name="Vincent R."/>
            <person name="Wingate V."/>
            <person name="Zouine M."/>
            <person name="Glaser P."/>
            <person name="Boemare N."/>
            <person name="Danchin A."/>
            <person name="Kunst F."/>
        </authorList>
    </citation>
    <scope>NUCLEOTIDE SEQUENCE [LARGE SCALE GENOMIC DNA]</scope>
    <source>
        <strain>DSM 15139 / CIP 105565 / TT01</strain>
    </source>
</reference>
<accession>Q7MYI5</accession>
<sequence length="189" mass="20921">MSNEASPAFESVLTALKAEKVIAYPTEAVFGLGCDPDSEKAVNELLILKKRPWQKGLILIADNYEQLQPYLDDKLLTEEQKKAMFACWPGPVTWVIPAKFSAPKWLTGQFATLAVRVSDHPLVKQLCTFYGKPLVSTSANLNGLEPCRTAEEVRQQFGDKLPILNGDVGGRKNPSEIRDALTGELYRQG</sequence>
<keyword id="KW-0067">ATP-binding</keyword>
<keyword id="KW-0963">Cytoplasm</keyword>
<keyword id="KW-0547">Nucleotide-binding</keyword>
<keyword id="KW-0548">Nucleotidyltransferase</keyword>
<keyword id="KW-1185">Reference proteome</keyword>
<keyword id="KW-0808">Transferase</keyword>
<keyword id="KW-0819">tRNA processing</keyword>